<organism>
    <name type="scientific">Flavobacterium johnsoniae (strain ATCC 17061 / DSM 2064 / JCM 8514 / BCRC 14874 / CCUG 350202 / NBRC 14942 / NCIMB 11054 / UW101)</name>
    <name type="common">Cytophaga johnsonae</name>
    <dbReference type="NCBI Taxonomy" id="376686"/>
    <lineage>
        <taxon>Bacteria</taxon>
        <taxon>Pseudomonadati</taxon>
        <taxon>Bacteroidota</taxon>
        <taxon>Flavobacteriia</taxon>
        <taxon>Flavobacteriales</taxon>
        <taxon>Flavobacteriaceae</taxon>
        <taxon>Flavobacterium</taxon>
    </lineage>
</organism>
<evidence type="ECO:0000255" key="1">
    <source>
        <dbReference type="HAMAP-Rule" id="MF_00093"/>
    </source>
</evidence>
<dbReference type="EMBL" id="CP000685">
    <property type="protein sequence ID" value="ABQ05336.1"/>
    <property type="molecule type" value="Genomic_DNA"/>
</dbReference>
<dbReference type="RefSeq" id="WP_012024375.1">
    <property type="nucleotide sequence ID" value="NC_009441.1"/>
</dbReference>
<dbReference type="SMR" id="A5FHI8"/>
<dbReference type="STRING" id="376686.Fjoh_2309"/>
<dbReference type="KEGG" id="fjo:Fjoh_2309"/>
<dbReference type="eggNOG" id="COG0216">
    <property type="taxonomic scope" value="Bacteria"/>
</dbReference>
<dbReference type="HOGENOM" id="CLU_036856_0_1_10"/>
<dbReference type="OrthoDB" id="9806673at2"/>
<dbReference type="Proteomes" id="UP000006694">
    <property type="component" value="Chromosome"/>
</dbReference>
<dbReference type="GO" id="GO:0005737">
    <property type="term" value="C:cytoplasm"/>
    <property type="evidence" value="ECO:0007669"/>
    <property type="project" value="UniProtKB-SubCell"/>
</dbReference>
<dbReference type="GO" id="GO:0016149">
    <property type="term" value="F:translation release factor activity, codon specific"/>
    <property type="evidence" value="ECO:0007669"/>
    <property type="project" value="UniProtKB-UniRule"/>
</dbReference>
<dbReference type="FunFam" id="3.30.160.20:FF:000004">
    <property type="entry name" value="Peptide chain release factor 1"/>
    <property type="match status" value="1"/>
</dbReference>
<dbReference type="FunFam" id="3.30.70.1660:FF:000002">
    <property type="entry name" value="Peptide chain release factor 1"/>
    <property type="match status" value="1"/>
</dbReference>
<dbReference type="Gene3D" id="3.30.160.20">
    <property type="match status" value="1"/>
</dbReference>
<dbReference type="Gene3D" id="3.30.70.1660">
    <property type="match status" value="2"/>
</dbReference>
<dbReference type="Gene3D" id="6.10.140.1950">
    <property type="match status" value="1"/>
</dbReference>
<dbReference type="HAMAP" id="MF_00093">
    <property type="entry name" value="Rel_fac_1"/>
    <property type="match status" value="1"/>
</dbReference>
<dbReference type="InterPro" id="IPR005139">
    <property type="entry name" value="PCRF"/>
</dbReference>
<dbReference type="InterPro" id="IPR000352">
    <property type="entry name" value="Pep_chain_release_fac_I"/>
</dbReference>
<dbReference type="InterPro" id="IPR045853">
    <property type="entry name" value="Pep_chain_release_fac_I_sf"/>
</dbReference>
<dbReference type="InterPro" id="IPR050057">
    <property type="entry name" value="Prokaryotic/Mito_RF"/>
</dbReference>
<dbReference type="InterPro" id="IPR004373">
    <property type="entry name" value="RF-1"/>
</dbReference>
<dbReference type="NCBIfam" id="TIGR00019">
    <property type="entry name" value="prfA"/>
    <property type="match status" value="1"/>
</dbReference>
<dbReference type="NCBIfam" id="NF001859">
    <property type="entry name" value="PRK00591.1"/>
    <property type="match status" value="1"/>
</dbReference>
<dbReference type="PANTHER" id="PTHR43804">
    <property type="entry name" value="LD18447P"/>
    <property type="match status" value="1"/>
</dbReference>
<dbReference type="PANTHER" id="PTHR43804:SF7">
    <property type="entry name" value="LD18447P"/>
    <property type="match status" value="1"/>
</dbReference>
<dbReference type="Pfam" id="PF03462">
    <property type="entry name" value="PCRF"/>
    <property type="match status" value="1"/>
</dbReference>
<dbReference type="Pfam" id="PF00472">
    <property type="entry name" value="RF-1"/>
    <property type="match status" value="1"/>
</dbReference>
<dbReference type="SMART" id="SM00937">
    <property type="entry name" value="PCRF"/>
    <property type="match status" value="1"/>
</dbReference>
<dbReference type="SUPFAM" id="SSF75620">
    <property type="entry name" value="Release factor"/>
    <property type="match status" value="1"/>
</dbReference>
<accession>A5FHI8</accession>
<protein>
    <recommendedName>
        <fullName evidence="1">Peptide chain release factor 1</fullName>
        <shortName evidence="1">RF-1</shortName>
    </recommendedName>
</protein>
<keyword id="KW-0963">Cytoplasm</keyword>
<keyword id="KW-0488">Methylation</keyword>
<keyword id="KW-0648">Protein biosynthesis</keyword>
<gene>
    <name evidence="1" type="primary">prfA</name>
    <name type="ordered locus">Fjoh_2309</name>
</gene>
<comment type="function">
    <text evidence="1">Peptide chain release factor 1 directs the termination of translation in response to the peptide chain termination codons UAG and UAA.</text>
</comment>
<comment type="subcellular location">
    <subcellularLocation>
        <location evidence="1">Cytoplasm</location>
    </subcellularLocation>
</comment>
<comment type="PTM">
    <text evidence="1">Methylated by PrmC. Methylation increases the termination efficiency of RF1.</text>
</comment>
<comment type="similarity">
    <text evidence="1">Belongs to the prokaryotic/mitochondrial release factor family.</text>
</comment>
<sequence>MLDRLQYVKQRFDEISDLIIQPDVISDQKRYKSLNQEYKGIKALVEKREEYIIVLANIDEANEIIADGSDAEMVEMAKMQLDEAKDRLPELEEEIKFMLIPKDPEDAKNVMVEIRAGTGGDEASIFAGDLFRMYTKYCETMGWRTSVVDMNEGTSGGFKEVIFEVTGEDVYGTLKFEAGVHRVQRVPQTETQGRVHTSAATVMVLPEAEEFDVQVDMNDVRVDFFCSSGPGGQSVNTTKSAVRLTHIPTGLVAQCQDEKSQHKNKDKALMVLRSRLYEMELAKKQEEDAKKRSSQVSSGDRSAKIRTYNYAQGRVTDHRVGLTLYDLGNIMNGDIQKIVSELQLVNNMEKLKEASEVY</sequence>
<reference key="1">
    <citation type="journal article" date="2009" name="Appl. Environ. Microbiol.">
        <title>Novel features of the polysaccharide-digesting gliding bacterium Flavobacterium johnsoniae as revealed by genome sequence analysis.</title>
        <authorList>
            <person name="McBride M.J."/>
            <person name="Xie G."/>
            <person name="Martens E.C."/>
            <person name="Lapidus A."/>
            <person name="Henrissat B."/>
            <person name="Rhodes R.G."/>
            <person name="Goltsman E."/>
            <person name="Wang W."/>
            <person name="Xu J."/>
            <person name="Hunnicutt D.W."/>
            <person name="Staroscik A.M."/>
            <person name="Hoover T.R."/>
            <person name="Cheng Y.Q."/>
            <person name="Stein J.L."/>
        </authorList>
    </citation>
    <scope>NUCLEOTIDE SEQUENCE [LARGE SCALE GENOMIC DNA]</scope>
    <source>
        <strain>ATCC 17061 / DSM 2064 / JCM 8514 / BCRC 14874 / CCUG 350202 / NBRC 14942 / NCIMB 11054 / UW101</strain>
    </source>
</reference>
<proteinExistence type="inferred from homology"/>
<name>RF1_FLAJ1</name>
<feature type="chain" id="PRO_1000075496" description="Peptide chain release factor 1">
    <location>
        <begin position="1"/>
        <end position="358"/>
    </location>
</feature>
<feature type="modified residue" description="N5-methylglutamine" evidence="1">
    <location>
        <position position="233"/>
    </location>
</feature>